<feature type="chain" id="PRO_0000459104" description="Sarcosine oxidase subunit gamma">
    <location>
        <begin position="1"/>
        <end position="205"/>
    </location>
</feature>
<feature type="helix" evidence="15">
    <location>
        <begin position="18"/>
        <end position="20"/>
    </location>
</feature>
<feature type="helix" evidence="15">
    <location>
        <begin position="21"/>
        <end position="26"/>
    </location>
</feature>
<feature type="helix" evidence="16">
    <location>
        <begin position="31"/>
        <end position="33"/>
    </location>
</feature>
<feature type="strand" evidence="15">
    <location>
        <begin position="35"/>
        <end position="39"/>
    </location>
</feature>
<feature type="strand" evidence="15">
    <location>
        <begin position="44"/>
        <end position="49"/>
    </location>
</feature>
<feature type="helix" evidence="15">
    <location>
        <begin position="55"/>
        <end position="63"/>
    </location>
</feature>
<feature type="strand" evidence="15">
    <location>
        <begin position="64"/>
        <end position="66"/>
    </location>
</feature>
<feature type="strand" evidence="15">
    <location>
        <begin position="74"/>
        <end position="77"/>
    </location>
</feature>
<feature type="strand" evidence="15">
    <location>
        <begin position="83"/>
        <end position="88"/>
    </location>
</feature>
<feature type="strand" evidence="15">
    <location>
        <begin position="91"/>
        <end position="98"/>
    </location>
</feature>
<feature type="helix" evidence="15">
    <location>
        <begin position="101"/>
        <end position="110"/>
    </location>
</feature>
<feature type="strand" evidence="15">
    <location>
        <begin position="113"/>
        <end position="119"/>
    </location>
</feature>
<feature type="turn" evidence="15">
    <location>
        <begin position="121"/>
        <end position="123"/>
    </location>
</feature>
<feature type="strand" evidence="15">
    <location>
        <begin position="127"/>
        <end position="131"/>
    </location>
</feature>
<feature type="helix" evidence="15">
    <location>
        <begin position="134"/>
        <end position="138"/>
    </location>
</feature>
<feature type="turn" evidence="15">
    <location>
        <begin position="139"/>
        <end position="141"/>
    </location>
</feature>
<feature type="turn" evidence="15">
    <location>
        <begin position="148"/>
        <end position="150"/>
    </location>
</feature>
<feature type="strand" evidence="15">
    <location>
        <begin position="155"/>
        <end position="161"/>
    </location>
</feature>
<feature type="strand" evidence="15">
    <location>
        <begin position="164"/>
        <end position="172"/>
    </location>
</feature>
<feature type="strand" evidence="15">
    <location>
        <begin position="175"/>
        <end position="179"/>
    </location>
</feature>
<feature type="helix" evidence="15">
    <location>
        <begin position="182"/>
        <end position="184"/>
    </location>
</feature>
<feature type="helix" evidence="15">
    <location>
        <begin position="185"/>
        <end position="196"/>
    </location>
</feature>
<feature type="helix" evidence="15">
    <location>
        <begin position="197"/>
        <end position="200"/>
    </location>
</feature>
<proteinExistence type="evidence at protein level"/>
<gene>
    <name evidence="6" type="primary">soxG</name>
</gene>
<keyword id="KW-0002">3D-structure</keyword>
<keyword id="KW-0963">Cytoplasm</keyword>
<keyword id="KW-0560">Oxidoreductase</keyword>
<accession>Q50LE9</accession>
<name>TSOXG_CORS9</name>
<organism>
    <name type="scientific">Corynebacterium sp. (strain U-96)</name>
    <dbReference type="NCBI Taxonomy" id="31944"/>
    <lineage>
        <taxon>Bacteria</taxon>
        <taxon>Bacillati</taxon>
        <taxon>Actinomycetota</taxon>
        <taxon>Actinomycetes</taxon>
        <taxon>Mycobacteriales</taxon>
        <taxon>Corynebacteriaceae</taxon>
        <taxon>Corynebacterium</taxon>
    </lineage>
</organism>
<sequence>MANDTMIDSTQLRRSPAAHLAAAMEAAEVAGERAVTLREVAFTTQLGLRAVPGSTGHAALAAATGVGLPAAVGEVAGDVSGTAVLWLGPDEFLLAAEENPALLDTLQGALGQEPGQVLDLSANRSVLQLEGPAAALVLRKSCPADLHPREFGVNRAITTSLANIPVLLWRTGEQSWRILPRASFTEHTVHWLIDAMSEFSAAEVA</sequence>
<comment type="function">
    <text evidence="3 4 5 8">In the presence of tetrahydrofolate, catalyzes the oxidative demethylation of sarcosine to yield glycine, 5,10-methylenetetrahydrofolate and hydrogen peroxide (PubMed:20675294). In the absence of tetrahydrofolate, catalyzes the oxidative demethylation of sarcosine to yield glycine, formaldehyde and hydrogen peroxide (PubMed:17395614, PubMed:20675294, PubMed:7240129). Can also use N-methyl-L-alanine and N-ethyl-L-glycine (PubMed:7240129). Is very specific for oxygen as an acceptor (PubMed:7240129).</text>
</comment>
<comment type="catalytic activity">
    <reaction evidence="4 8">
        <text>sarcosine + (6S)-5,6,7,8-tetrahydrofolate + O2 = (6R)-5,10-methylene-5,6,7,8-tetrahydrofolate + glycine + H2O2</text>
        <dbReference type="Rhea" id="RHEA:70455"/>
        <dbReference type="ChEBI" id="CHEBI:15379"/>
        <dbReference type="ChEBI" id="CHEBI:15636"/>
        <dbReference type="ChEBI" id="CHEBI:16240"/>
        <dbReference type="ChEBI" id="CHEBI:57305"/>
        <dbReference type="ChEBI" id="CHEBI:57433"/>
        <dbReference type="ChEBI" id="CHEBI:57453"/>
        <dbReference type="EC" id="1.5.3.24"/>
    </reaction>
</comment>
<comment type="catalytic activity">
    <reaction evidence="3 4 5">
        <text>sarcosine + O2 + H2O = formaldehyde + glycine + H2O2</text>
        <dbReference type="Rhea" id="RHEA:13313"/>
        <dbReference type="ChEBI" id="CHEBI:15377"/>
        <dbReference type="ChEBI" id="CHEBI:15379"/>
        <dbReference type="ChEBI" id="CHEBI:16240"/>
        <dbReference type="ChEBI" id="CHEBI:16842"/>
        <dbReference type="ChEBI" id="CHEBI:57305"/>
        <dbReference type="ChEBI" id="CHEBI:57433"/>
    </reaction>
</comment>
<comment type="activity regulation">
    <text evidence="5">Inhibited by Zn(2+), Cu(2+), Cd(2+), Hg(2+), Ag(+), p-chloromercuribenzoate (p-CMB), iodoacetamide, N-ethylmaleimide, CN(-), o-phenanthroline and sodium lauryl sulfate.</text>
</comment>
<comment type="biophysicochemical properties">
    <kinetics>
        <KM evidence="5">3.4 mM for sarcosine (at pH 8.3)</KM>
        <KM evidence="5">3.8 mM for sarcosine (at pH 7.0)</KM>
        <KM evidence="3">2.8 mM for sarcosine (at pH 8.0 and 25 degrees Celsius)</KM>
        <KM evidence="4">1.4 mM for sarcosine (at pH 8.0 and 25 degrees Celsius)</KM>
        <KM evidence="5">8.7 mM for N-methyl-L-alanine (at pH 8.3)</KM>
        <KM evidence="5">12.4 mM for N-methyl-L-alanine (at pH 7.0)</KM>
        <KM evidence="5">11.4 mM for N-ethyl-L-glycine (at pH 7.0)</KM>
        <KM evidence="5">0.13 mM for oxygen</KM>
        <KM evidence="3">17.6 uM for oxygen (at pH 8.0 and 25 degrees Celsius)</KM>
        <Vmax evidence="5">12.81 umol/min/mg enzyme toward oxygen</Vmax>
        <text evidence="4 5">kcat is 5.8 sec(-1) with sarcosine as substrate (at pH 8.3). kcat is 3.0 sec(-1) with sarcosine as substrate (at pH 7.0). kcat is 2.1 sec(-1) with N-methyl-L-alanine as substrate (at pH 8.3). kcat is 1.8 sec(-1) with N-methyl-L-alanine as substrate (at pH 7.0). kcat is 2.2 sec(-1) with N-ethyl-L-glycine as substrate (at pH 7.0) (PubMed:7240129). kcat is 17.5 sec(-1) with sarcosine as substrate (at pH 8.0 and 25 degrees Celsius, in the absence of tetrahydrofolate) (PubMed:20675294).</text>
    </kinetics>
    <phDependence>
        <text evidence="5">Optimum pH is 7.7 in potassium phosphate buffer and 8.0-8.5 in glycylglycine buffer.</text>
    </phDependence>
    <temperatureDependence>
        <text evidence="5">Optimum temperature is 37 degrees Celsius.</text>
    </temperatureDependence>
</comment>
<comment type="subunit">
    <text evidence="1 2 4 5">Heterotetramer composed of subunits alpha (SoxA), beta (SoxB), gamma (SoxG) and delta (SoxD).</text>
</comment>
<comment type="subcellular location">
    <subcellularLocation>
        <location evidence="7">Cytoplasm</location>
    </subcellularLocation>
</comment>
<comment type="similarity">
    <text evidence="7">Belongs to the SoxG family.</text>
</comment>
<evidence type="ECO:0000269" key="1">
    <source>
    </source>
</evidence>
<evidence type="ECO:0000269" key="2">
    <source>
    </source>
</evidence>
<evidence type="ECO:0000269" key="3">
    <source>
    </source>
</evidence>
<evidence type="ECO:0000269" key="4">
    <source>
    </source>
</evidence>
<evidence type="ECO:0000269" key="5">
    <source>
    </source>
</evidence>
<evidence type="ECO:0000303" key="6">
    <source>
    </source>
</evidence>
<evidence type="ECO:0000305" key="7"/>
<evidence type="ECO:0000305" key="8">
    <source>
    </source>
</evidence>
<evidence type="ECO:0007744" key="9">
    <source>
        <dbReference type="PDB" id="1VRQ"/>
    </source>
</evidence>
<evidence type="ECO:0007744" key="10">
    <source>
        <dbReference type="PDB" id="1X31"/>
    </source>
</evidence>
<evidence type="ECO:0007744" key="11">
    <source>
        <dbReference type="PDB" id="3AD7"/>
    </source>
</evidence>
<evidence type="ECO:0007744" key="12">
    <source>
        <dbReference type="PDB" id="3AD8"/>
    </source>
</evidence>
<evidence type="ECO:0007744" key="13">
    <source>
        <dbReference type="PDB" id="3AD9"/>
    </source>
</evidence>
<evidence type="ECO:0007744" key="14">
    <source>
        <dbReference type="PDB" id="3ADA"/>
    </source>
</evidence>
<evidence type="ECO:0007829" key="15">
    <source>
        <dbReference type="PDB" id="1X31"/>
    </source>
</evidence>
<evidence type="ECO:0007829" key="16">
    <source>
        <dbReference type="PDB" id="3ADA"/>
    </source>
</evidence>
<reference key="1">
    <citation type="journal article" date="2005" name="Biosci. Biotechnol. Biochem.">
        <title>Corynebacterium sp. U-96 contains a cluster of genes of enzymes for the catabolism of sarcosine to pyruvate.</title>
        <authorList>
            <person name="Suzuki H."/>
            <person name="Tamamura R."/>
            <person name="Yajima S."/>
            <person name="Kanno M."/>
            <person name="Suguro M."/>
        </authorList>
    </citation>
    <scope>NUCLEOTIDE SEQUENCE [GENOMIC DNA]</scope>
    <scope>SUBUNIT</scope>
    <source>
        <strain>U-96</strain>
    </source>
</reference>
<reference key="2">
    <citation type="journal article" date="1981" name="J. Biochem.">
        <title>Purification and some properties of sarcosine oxidase from Corynebacterium sp. U-96.</title>
        <authorList>
            <person name="Suzuki M."/>
        </authorList>
    </citation>
    <scope>FUNCTION</scope>
    <scope>CATALYTIC ACTIVITY</scope>
    <scope>ACTIVITY REGULATION</scope>
    <scope>BIOPHYSICOCHEMICAL PROPERTIES</scope>
    <scope>SUBUNIT</scope>
    <source>
        <strain>U-96</strain>
    </source>
</reference>
<reference key="3">
    <citation type="journal article" date="2007" name="J. Biochem.">
        <title>Kinetic studies on the role of Lys-171 and Lys-358 in the beta subunit of sarcosine oxidase from Corynebacterium sp. U-96.</title>
        <authorList>
            <person name="Saito M."/>
            <person name="Kanno M."/>
            <person name="Iizuka H."/>
            <person name="Suzuki H."/>
        </authorList>
    </citation>
    <scope>FUNCTION</scope>
    <scope>CATALYTIC ACTIVITY</scope>
    <scope>BIOPHYSICOCHEMICAL PROPERTIES</scope>
    <source>
        <strain>U-96</strain>
    </source>
</reference>
<reference evidence="9 10" key="4">
    <citation type="journal article" date="2005" name="Biochem. Biophys. Res. Commun.">
        <title>Crystal structure of heterotetrameric sarcosine oxidase from Corynebacterium sp. U-96.</title>
        <authorList>
            <person name="Ida K."/>
            <person name="Moriguchi T."/>
            <person name="Suzuki H."/>
        </authorList>
    </citation>
    <scope>X-RAY CRYSTALLOGRAPHY (2.15 ANGSTROMS) OF 6-205</scope>
    <scope>SUBUNIT</scope>
    <source>
        <strain>U-96</strain>
    </source>
</reference>
<reference evidence="11 12 13 14" key="5">
    <citation type="journal article" date="2010" name="J. Biochem.">
        <title>Channeling and conformational changes in the heterotetrameric sarcosine oxidase from Corynebacterium sp. U-96.</title>
        <authorList>
            <person name="Moriguchi T."/>
            <person name="Ida K."/>
            <person name="Hikima T."/>
            <person name="Ueno G."/>
            <person name="Yamamoto M."/>
            <person name="Suzuki H."/>
        </authorList>
    </citation>
    <scope>X-RAY CRYSTALLOGRAPHY (2.20 ANGSTROMS) OF 11-205</scope>
    <scope>FUNCTION</scope>
    <scope>CATALYTIC ACTIVITY</scope>
    <scope>REACTION MECHANISM</scope>
    <scope>BIOPHYSICOCHEMICAL PROPERTIES</scope>
    <scope>SUBUNIT</scope>
    <source>
        <strain>U-96</strain>
    </source>
</reference>
<dbReference type="EC" id="1.5.3.24" evidence="4 8"/>
<dbReference type="EMBL" id="AB186138">
    <property type="protein sequence ID" value="BAD97819.1"/>
    <property type="molecule type" value="Genomic_DNA"/>
</dbReference>
<dbReference type="PDB" id="1VRQ">
    <property type="method" value="X-ray"/>
    <property type="resolution" value="2.20 A"/>
    <property type="chains" value="C=6-205"/>
</dbReference>
<dbReference type="PDB" id="1X31">
    <property type="method" value="X-ray"/>
    <property type="resolution" value="2.15 A"/>
    <property type="chains" value="C=6-205"/>
</dbReference>
<dbReference type="PDB" id="3AD7">
    <property type="method" value="X-ray"/>
    <property type="resolution" value="2.20 A"/>
    <property type="chains" value="C=11-205"/>
</dbReference>
<dbReference type="PDB" id="3AD8">
    <property type="method" value="X-ray"/>
    <property type="resolution" value="2.20 A"/>
    <property type="chains" value="C=11-205"/>
</dbReference>
<dbReference type="PDB" id="3AD9">
    <property type="method" value="X-ray"/>
    <property type="resolution" value="2.30 A"/>
    <property type="chains" value="C=11-205"/>
</dbReference>
<dbReference type="PDB" id="3ADA">
    <property type="method" value="X-ray"/>
    <property type="resolution" value="2.20 A"/>
    <property type="chains" value="C=11-205"/>
</dbReference>
<dbReference type="PDBsum" id="1VRQ"/>
<dbReference type="PDBsum" id="1X31"/>
<dbReference type="PDBsum" id="3AD7"/>
<dbReference type="PDBsum" id="3AD8"/>
<dbReference type="PDBsum" id="3AD9"/>
<dbReference type="PDBsum" id="3ADA"/>
<dbReference type="SMR" id="Q50LE9"/>
<dbReference type="BRENDA" id="1.5.3.1">
    <property type="organism ID" value="10044"/>
</dbReference>
<dbReference type="EvolutionaryTrace" id="Q50LE9"/>
<dbReference type="GO" id="GO:0005737">
    <property type="term" value="C:cytoplasm"/>
    <property type="evidence" value="ECO:0007669"/>
    <property type="project" value="UniProtKB-SubCell"/>
</dbReference>
<dbReference type="GO" id="GO:0008115">
    <property type="term" value="F:sarcosine oxidase activity"/>
    <property type="evidence" value="ECO:0007669"/>
    <property type="project" value="InterPro"/>
</dbReference>
<dbReference type="GO" id="GO:1901053">
    <property type="term" value="P:sarcosine catabolic process"/>
    <property type="evidence" value="ECO:0007669"/>
    <property type="project" value="InterPro"/>
</dbReference>
<dbReference type="Gene3D" id="3.30.70.1520">
    <property type="entry name" value="Heterotetrameric sarcosine oxidase"/>
    <property type="match status" value="1"/>
</dbReference>
<dbReference type="Gene3D" id="3.30.1360.120">
    <property type="entry name" value="Probable tRNA modification gtpase trme, domain 1"/>
    <property type="match status" value="1"/>
</dbReference>
<dbReference type="InterPro" id="IPR007375">
    <property type="entry name" value="SoxG"/>
</dbReference>
<dbReference type="InterPro" id="IPR006280">
    <property type="entry name" value="SoxG_het"/>
</dbReference>
<dbReference type="InterPro" id="IPR027266">
    <property type="entry name" value="TrmE/GcvT_dom1"/>
</dbReference>
<dbReference type="NCBIfam" id="TIGR01375">
    <property type="entry name" value="soxG"/>
    <property type="match status" value="1"/>
</dbReference>
<dbReference type="Pfam" id="PF04268">
    <property type="entry name" value="SoxG"/>
    <property type="match status" value="1"/>
</dbReference>
<dbReference type="SUPFAM" id="SSF103025">
    <property type="entry name" value="Folate-binding domain"/>
    <property type="match status" value="1"/>
</dbReference>
<protein>
    <recommendedName>
        <fullName evidence="7">Sarcosine oxidase subunit gamma</fullName>
        <shortName evidence="7">Sarcosine oxidase subunit G</shortName>
        <ecNumber evidence="4 8">1.5.3.24</ecNumber>
    </recommendedName>
    <alternativeName>
        <fullName evidence="7">Sarcosine oxidase (5,10-methylenetetrahydrofolate-forming) subunit gamma</fullName>
    </alternativeName>
    <alternativeName>
        <fullName evidence="7">Tetrameric sarcosine oxidase subunit gamma</fullName>
        <shortName evidence="7">TSOX subunit gamma</shortName>
    </alternativeName>
</protein>